<organism>
    <name type="scientific">Saccharomyces cerevisiae (strain ATCC 204508 / S288c)</name>
    <name type="common">Baker's yeast</name>
    <dbReference type="NCBI Taxonomy" id="559292"/>
    <lineage>
        <taxon>Eukaryota</taxon>
        <taxon>Fungi</taxon>
        <taxon>Dikarya</taxon>
        <taxon>Ascomycota</taxon>
        <taxon>Saccharomycotina</taxon>
        <taxon>Saccharomycetes</taxon>
        <taxon>Saccharomycetales</taxon>
        <taxon>Saccharomycetaceae</taxon>
        <taxon>Saccharomyces</taxon>
    </lineage>
</organism>
<sequence length="821" mass="95380">MNEVPTTPVRLILGQAQQREQNSENCSQERNPRTFNSEPDSSFNSPGSSQFVIHPHEPLEKEKDEKQDLDRSIDYGRSSALNNKNNANPLENIDINKMFDDKKSDSGTNDDKGGASTSDKHVLALNYSPIRVEMNSSEKRSDKNVDVDENDKEGSHINKKLKLQLESVPDLKQSSTKDIINDKEEIMSSPMAIDMIETNISPNKFIINDGVERNDSFNINTDTLKLENDINEKQQEEDFIKSNSNNVVNIDNAYKEKEDEENDITNSHINRLTPLYETSARESNSNEEGRNDYDDDNQLDIRHDNFQIVAKRNEELTDQIYHLNQMLNSLISKNESLSFQYEKLNKNHQLLIDLTNEKLDKLNTERESDIAKVEKFKKRIKELNTEIKVLNSNQKILQEKFDASITEVNHIKGEHENTVNTLQQNEKILNDKNVELENMKAELKGNNDKLSEYETTLNDLNSRIVQLNDKIESTDIVLKSKENELDNLKLSLKETLSISKDFNDSDLIGQINELISTKNNLQQKMDDLNNLNDDNLKVVQDKLIKNEETLKLKEAEIDSLNSEMDELKKQITSKDDEFKMWQSKYETVEDEAKIRNAEVTELNGDIEDLKESKLHLEETITELENKVHKLENECELEKQKFEKTSLELESLQLKNSNIQAEHIKELENLHENLISLQNELKISSDRITTLTKENEVLMEQNNNNNNSVTLSNDQKDRDDEKIKSLGKQVQDWKEKYEAKEKDTNKRLKLLAEDLYIQYSSKHEQKVKLLKKGYENKYQNKFDQLNLENKTLSEEIEQLNKQLSSEREEKQELLKLLENEKK</sequence>
<keyword id="KW-0131">Cell cycle</keyword>
<keyword id="KW-0132">Cell division</keyword>
<keyword id="KW-0137">Centromere</keyword>
<keyword id="KW-0158">Chromosome</keyword>
<keyword id="KW-0159">Chromosome partition</keyword>
<keyword id="KW-0175">Coiled coil</keyword>
<keyword id="KW-0963">Cytoplasm</keyword>
<keyword id="KW-0206">Cytoskeleton</keyword>
<keyword id="KW-0995">Kinetochore</keyword>
<keyword id="KW-0469">Meiosis</keyword>
<keyword id="KW-0493">Microtubule</keyword>
<keyword id="KW-0498">Mitosis</keyword>
<keyword id="KW-0597">Phosphoprotein</keyword>
<keyword id="KW-1185">Reference proteome</keyword>
<feature type="chain" id="PRO_0000270573" description="Kinetochore protein SLK19">
    <location>
        <begin position="1"/>
        <end position="821"/>
    </location>
</feature>
<feature type="region of interest" description="Disordered" evidence="2">
    <location>
        <begin position="1"/>
        <end position="52"/>
    </location>
</feature>
<feature type="region of interest" description="Disordered" evidence="2">
    <location>
        <begin position="99"/>
        <end position="153"/>
    </location>
</feature>
<feature type="region of interest" description="Disordered" evidence="2">
    <location>
        <begin position="274"/>
        <end position="298"/>
    </location>
</feature>
<feature type="region of interest" description="Disordered" evidence="2">
    <location>
        <begin position="699"/>
        <end position="720"/>
    </location>
</feature>
<feature type="coiled-coil region" evidence="1">
    <location>
        <begin position="310"/>
        <end position="821"/>
    </location>
</feature>
<feature type="compositionally biased region" description="Polar residues" evidence="2">
    <location>
        <begin position="15"/>
        <end position="51"/>
    </location>
</feature>
<feature type="compositionally biased region" description="Basic and acidic residues" evidence="2">
    <location>
        <begin position="99"/>
        <end position="122"/>
    </location>
</feature>
<feature type="compositionally biased region" description="Basic and acidic residues" evidence="2">
    <location>
        <begin position="136"/>
        <end position="153"/>
    </location>
</feature>
<feature type="site" description="Cleavage; by ESP1">
    <location>
        <begin position="77"/>
        <end position="78"/>
    </location>
</feature>
<feature type="modified residue" description="Phosphothreonine; by CDC28" evidence="12">
    <location>
        <position position="7"/>
    </location>
</feature>
<feature type="modified residue" description="Phosphoserine" evidence="13 14">
    <location>
        <position position="188"/>
    </location>
</feature>
<feature type="modified residue" description="Phosphoserine" evidence="13 14">
    <location>
        <position position="189"/>
    </location>
</feature>
<feature type="modified residue" description="Phosphoserine; by CDC28" evidence="13">
    <location>
        <position position="201"/>
    </location>
</feature>
<feature type="modified residue" description="Phosphoserine" evidence="13 14">
    <location>
        <position position="216"/>
    </location>
</feature>
<feature type="modified residue" description="Phosphothreonine" evidence="13">
    <location>
        <position position="273"/>
    </location>
</feature>
<feature type="modified residue" description="Phosphoserine" evidence="14">
    <location>
        <position position="283"/>
    </location>
</feature>
<feature type="mutagenesis site" description="No cleavage by ESP1." evidence="6">
    <original>R</original>
    <variation>E</variation>
    <location>
        <position position="77"/>
    </location>
</feature>
<feature type="mutagenesis site" description="Destabilizes; not detectable in anaphase cells; spindle becomes thin and fragile." evidence="6">
    <original>S</original>
    <variation>R</variation>
    <location>
        <position position="78"/>
    </location>
</feature>
<dbReference type="EMBL" id="Z75103">
    <property type="protein sequence ID" value="CAA99408.1"/>
    <property type="molecule type" value="Genomic_DNA"/>
</dbReference>
<dbReference type="EMBL" id="BK006948">
    <property type="protein sequence ID" value="DAA10970.1"/>
    <property type="molecule type" value="Genomic_DNA"/>
</dbReference>
<dbReference type="PIR" id="S67087">
    <property type="entry name" value="S67087"/>
</dbReference>
<dbReference type="RefSeq" id="NP_014838.3">
    <property type="nucleotide sequence ID" value="NM_001183614.3"/>
</dbReference>
<dbReference type="SMR" id="Q08581"/>
<dbReference type="BioGRID" id="34593">
    <property type="interactions" value="246"/>
</dbReference>
<dbReference type="DIP" id="DIP-2595N"/>
<dbReference type="FunCoup" id="Q08581">
    <property type="interactions" value="277"/>
</dbReference>
<dbReference type="IntAct" id="Q08581">
    <property type="interactions" value="5"/>
</dbReference>
<dbReference type="MINT" id="Q08581"/>
<dbReference type="STRING" id="4932.YOR195W"/>
<dbReference type="iPTMnet" id="Q08581"/>
<dbReference type="PaxDb" id="4932-YOR195W"/>
<dbReference type="PeptideAtlas" id="Q08581"/>
<dbReference type="EnsemblFungi" id="YOR195W_mRNA">
    <property type="protein sequence ID" value="YOR195W"/>
    <property type="gene ID" value="YOR195W"/>
</dbReference>
<dbReference type="GeneID" id="854370"/>
<dbReference type="KEGG" id="sce:YOR195W"/>
<dbReference type="AGR" id="SGD:S000005721"/>
<dbReference type="SGD" id="S000005721">
    <property type="gene designation" value="SLK19"/>
</dbReference>
<dbReference type="VEuPathDB" id="FungiDB:YOR195W"/>
<dbReference type="eggNOG" id="ENOG502QV33">
    <property type="taxonomic scope" value="Eukaryota"/>
</dbReference>
<dbReference type="HOGENOM" id="CLU_018393_0_0_1"/>
<dbReference type="InParanoid" id="Q08581"/>
<dbReference type="OMA" id="NFLMSPN"/>
<dbReference type="OrthoDB" id="5367584at2759"/>
<dbReference type="BioCyc" id="YEAST:G3O-33704-MONOMER"/>
<dbReference type="BioGRID-ORCS" id="854370">
    <property type="hits" value="0 hits in 10 CRISPR screens"/>
</dbReference>
<dbReference type="PRO" id="PR:Q08581"/>
<dbReference type="Proteomes" id="UP000002311">
    <property type="component" value="Chromosome XV"/>
</dbReference>
<dbReference type="RNAct" id="Q08581">
    <property type="molecule type" value="protein"/>
</dbReference>
<dbReference type="GO" id="GO:0005737">
    <property type="term" value="C:cytoplasm"/>
    <property type="evidence" value="ECO:0007669"/>
    <property type="project" value="UniProtKB-KW"/>
</dbReference>
<dbReference type="GO" id="GO:0000776">
    <property type="term" value="C:kinetochore"/>
    <property type="evidence" value="ECO:0000314"/>
    <property type="project" value="SGD"/>
</dbReference>
<dbReference type="GO" id="GO:0005874">
    <property type="term" value="C:microtubule"/>
    <property type="evidence" value="ECO:0007669"/>
    <property type="project" value="UniProtKB-KW"/>
</dbReference>
<dbReference type="GO" id="GO:0005819">
    <property type="term" value="C:spindle"/>
    <property type="evidence" value="ECO:0000314"/>
    <property type="project" value="SGD"/>
</dbReference>
<dbReference type="GO" id="GO:0051233">
    <property type="term" value="C:spindle midzone"/>
    <property type="evidence" value="ECO:0000314"/>
    <property type="project" value="SGD"/>
</dbReference>
<dbReference type="GO" id="GO:0005816">
    <property type="term" value="C:spindle pole body"/>
    <property type="evidence" value="ECO:0007669"/>
    <property type="project" value="UniProtKB-SubCell"/>
</dbReference>
<dbReference type="GO" id="GO:0051301">
    <property type="term" value="P:cell division"/>
    <property type="evidence" value="ECO:0007669"/>
    <property type="project" value="UniProtKB-KW"/>
</dbReference>
<dbReference type="GO" id="GO:0098653">
    <property type="term" value="P:centromere clustering"/>
    <property type="evidence" value="ECO:0000314"/>
    <property type="project" value="SGD"/>
</dbReference>
<dbReference type="GO" id="GO:0007059">
    <property type="term" value="P:chromosome segregation"/>
    <property type="evidence" value="ECO:0000315"/>
    <property type="project" value="SGD"/>
</dbReference>
<dbReference type="GO" id="GO:0051321">
    <property type="term" value="P:meiotic cell cycle"/>
    <property type="evidence" value="ECO:0000315"/>
    <property type="project" value="SGD"/>
</dbReference>
<dbReference type="GO" id="GO:0007052">
    <property type="term" value="P:mitotic spindle organization"/>
    <property type="evidence" value="ECO:0000315"/>
    <property type="project" value="SGD"/>
</dbReference>
<dbReference type="GO" id="GO:0007097">
    <property type="term" value="P:nuclear migration"/>
    <property type="evidence" value="ECO:0000315"/>
    <property type="project" value="SGD"/>
</dbReference>
<dbReference type="GO" id="GO:0031536">
    <property type="term" value="P:positive regulation of exit from mitosis"/>
    <property type="evidence" value="ECO:0000315"/>
    <property type="project" value="SGD"/>
</dbReference>
<dbReference type="GO" id="GO:0071459">
    <property type="term" value="P:protein localization to chromosome, centromeric region"/>
    <property type="evidence" value="ECO:0000314"/>
    <property type="project" value="SGD"/>
</dbReference>
<dbReference type="Gene3D" id="1.10.287.1490">
    <property type="match status" value="1"/>
</dbReference>
<dbReference type="InterPro" id="IPR024312">
    <property type="entry name" value="TACC_fungi"/>
</dbReference>
<dbReference type="Pfam" id="PF12709">
    <property type="entry name" value="Fungal_TACC"/>
    <property type="match status" value="1"/>
</dbReference>
<gene>
    <name type="primary">SLK19</name>
    <name type="ordered locus">YOR195W</name>
</gene>
<protein>
    <recommendedName>
        <fullName>Kinetochore protein SLK19</fullName>
    </recommendedName>
    <alternativeName>
        <fullName>Synthetic lethal KAR3 protein 19</fullName>
    </alternativeName>
</protein>
<evidence type="ECO:0000255" key="1"/>
<evidence type="ECO:0000256" key="2">
    <source>
        <dbReference type="SAM" id="MobiDB-lite"/>
    </source>
</evidence>
<evidence type="ECO:0000269" key="3">
    <source>
    </source>
</evidence>
<evidence type="ECO:0000269" key="4">
    <source>
    </source>
</evidence>
<evidence type="ECO:0000269" key="5">
    <source>
    </source>
</evidence>
<evidence type="ECO:0000269" key="6">
    <source>
    </source>
</evidence>
<evidence type="ECO:0000269" key="7">
    <source>
    </source>
</evidence>
<evidence type="ECO:0000269" key="8">
    <source>
    </source>
</evidence>
<evidence type="ECO:0000269" key="9">
    <source>
    </source>
</evidence>
<evidence type="ECO:0000269" key="10">
    <source>
    </source>
</evidence>
<evidence type="ECO:0000269" key="11">
    <source>
    </source>
</evidence>
<evidence type="ECO:0000305" key="12"/>
<evidence type="ECO:0007744" key="13">
    <source>
    </source>
</evidence>
<evidence type="ECO:0007744" key="14">
    <source>
    </source>
</evidence>
<comment type="function">
    <text evidence="3 4 5 6 7 8 9">Has a role in spindle assembly and stability. Required to ensure a timely exit form mitosis. Essential to maintain pre-anaphase spindle polarity. Associates to the plus ends of the microtubules at the kinetochore and spindle midzone. A component of the FEAR (CDC14 Early Anaphase Release) network which promotes CDC14 release from the nucleolus during early anaphase. Required for proper chromosome segregation during meiosis I where it prevents premature sister chromatid separation.</text>
</comment>
<comment type="subcellular location">
    <subcellularLocation>
        <location>Chromosome</location>
        <location>Centromere</location>
    </subcellularLocation>
    <subcellularLocation>
        <location>Chromosome</location>
        <location>Centromere</location>
        <location>Kinetochore</location>
    </subcellularLocation>
    <subcellularLocation>
        <location>Cytoplasm</location>
        <location>Cytoskeleton</location>
        <location>Microtubule organizing center</location>
        <location>Spindle pole body</location>
    </subcellularLocation>
    <text>Spindle midzone during anaphase. During meiotic prophase localizes to the centromere and remains there until anaphase I.</text>
</comment>
<comment type="PTM">
    <text>Cleaved by ESP1 at the onset of anaphase.</text>
</comment>
<comment type="PTM">
    <text evidence="6 9 11">Phosphorylated by CDC5/Polo-like kinase at the onset of anaphase. Phosphorylation takes places at proximity to cleavage sites and is required for an efficient cleavage by ESP1. Phosphorylated also by CDC28.</text>
</comment>
<comment type="miscellaneous">
    <text evidence="10">Present with 314 molecules/cell in log phase SD medium.</text>
</comment>
<accession>Q08581</accession>
<accession>D6W2Q4</accession>
<proteinExistence type="evidence at protein level"/>
<name>SLK19_YEAST</name>
<reference key="1">
    <citation type="journal article" date="1997" name="Nature">
        <title>The nucleotide sequence of Saccharomyces cerevisiae chromosome XV.</title>
        <authorList>
            <person name="Dujon B."/>
            <person name="Albermann K."/>
            <person name="Aldea M."/>
            <person name="Alexandraki D."/>
            <person name="Ansorge W."/>
            <person name="Arino J."/>
            <person name="Benes V."/>
            <person name="Bohn C."/>
            <person name="Bolotin-Fukuhara M."/>
            <person name="Bordonne R."/>
            <person name="Boyer J."/>
            <person name="Camasses A."/>
            <person name="Casamayor A."/>
            <person name="Casas C."/>
            <person name="Cheret G."/>
            <person name="Cziepluch C."/>
            <person name="Daignan-Fornier B."/>
            <person name="Dang V.-D."/>
            <person name="de Haan M."/>
            <person name="Delius H."/>
            <person name="Durand P."/>
            <person name="Fairhead C."/>
            <person name="Feldmann H."/>
            <person name="Gaillon L."/>
            <person name="Galisson F."/>
            <person name="Gamo F.-J."/>
            <person name="Gancedo C."/>
            <person name="Goffeau A."/>
            <person name="Goulding S.E."/>
            <person name="Grivell L.A."/>
            <person name="Habbig B."/>
            <person name="Hand N.J."/>
            <person name="Hani J."/>
            <person name="Hattenhorst U."/>
            <person name="Hebling U."/>
            <person name="Hernando Y."/>
            <person name="Herrero E."/>
            <person name="Heumann K."/>
            <person name="Hiesel R."/>
            <person name="Hilger F."/>
            <person name="Hofmann B."/>
            <person name="Hollenberg C.P."/>
            <person name="Hughes B."/>
            <person name="Jauniaux J.-C."/>
            <person name="Kalogeropoulos A."/>
            <person name="Katsoulou C."/>
            <person name="Kordes E."/>
            <person name="Lafuente M.J."/>
            <person name="Landt O."/>
            <person name="Louis E.J."/>
            <person name="Maarse A.C."/>
            <person name="Madania A."/>
            <person name="Mannhaupt G."/>
            <person name="Marck C."/>
            <person name="Martin R.P."/>
            <person name="Mewes H.-W."/>
            <person name="Michaux G."/>
            <person name="Paces V."/>
            <person name="Parle-McDermott A.G."/>
            <person name="Pearson B.M."/>
            <person name="Perrin A."/>
            <person name="Pettersson B."/>
            <person name="Poch O."/>
            <person name="Pohl T.M."/>
            <person name="Poirey R."/>
            <person name="Portetelle D."/>
            <person name="Pujol A."/>
            <person name="Purnelle B."/>
            <person name="Ramezani Rad M."/>
            <person name="Rechmann S."/>
            <person name="Schwager C."/>
            <person name="Schweizer M."/>
            <person name="Sor F."/>
            <person name="Sterky F."/>
            <person name="Tarassov I.A."/>
            <person name="Teodoru C."/>
            <person name="Tettelin H."/>
            <person name="Thierry A."/>
            <person name="Tobiasch E."/>
            <person name="Tzermia M."/>
            <person name="Uhlen M."/>
            <person name="Unseld M."/>
            <person name="Valens M."/>
            <person name="Vandenbol M."/>
            <person name="Vetter I."/>
            <person name="Vlcek C."/>
            <person name="Voet M."/>
            <person name="Volckaert G."/>
            <person name="Voss H."/>
            <person name="Wambutt R."/>
            <person name="Wedler H."/>
            <person name="Wiemann S."/>
            <person name="Winsor B."/>
            <person name="Wolfe K.H."/>
            <person name="Zollner A."/>
            <person name="Zumstein E."/>
            <person name="Kleine K."/>
        </authorList>
    </citation>
    <scope>NUCLEOTIDE SEQUENCE [LARGE SCALE GENOMIC DNA]</scope>
    <source>
        <strain>ATCC 204508 / S288c</strain>
    </source>
</reference>
<reference key="2">
    <citation type="journal article" date="2014" name="G3 (Bethesda)">
        <title>The reference genome sequence of Saccharomyces cerevisiae: Then and now.</title>
        <authorList>
            <person name="Engel S.R."/>
            <person name="Dietrich F.S."/>
            <person name="Fisk D.G."/>
            <person name="Binkley G."/>
            <person name="Balakrishnan R."/>
            <person name="Costanzo M.C."/>
            <person name="Dwight S.S."/>
            <person name="Hitz B.C."/>
            <person name="Karra K."/>
            <person name="Nash R.S."/>
            <person name="Weng S."/>
            <person name="Wong E.D."/>
            <person name="Lloyd P."/>
            <person name="Skrzypek M.S."/>
            <person name="Miyasato S.R."/>
            <person name="Simison M."/>
            <person name="Cherry J.M."/>
        </authorList>
    </citation>
    <scope>GENOME REANNOTATION</scope>
    <source>
        <strain>ATCC 204508 / S288c</strain>
    </source>
</reference>
<reference key="3">
    <citation type="journal article" date="1999" name="J. Cell Biol.">
        <title>Slk19p is a centromere protein that functions to stabilize mitotic spindles.</title>
        <authorList>
            <person name="Zeng X."/>
            <person name="Kahana J.A."/>
            <person name="Silver P.A."/>
            <person name="Morphew M.K."/>
            <person name="McIntosh J.R."/>
            <person name="Fitch I.T."/>
            <person name="Carbon J."/>
            <person name="Saunders W.S."/>
        </authorList>
    </citation>
    <scope>FUNCTION</scope>
    <scope>SUBCELLULAR LOCATION</scope>
</reference>
<reference key="4">
    <citation type="journal article" date="2000" name="Curr. Biol.">
        <title>Slk19p is necessary to prevent separation of sister chromatids in meiosis I.</title>
        <authorList>
            <person name="Kamieniecki R.J."/>
            <person name="Shanks R.M.Q."/>
            <person name="Dawson D.S."/>
        </authorList>
    </citation>
    <scope>FUNCTION</scope>
    <scope>SUBCELLULAR LOCATION</scope>
</reference>
<reference key="5">
    <citation type="journal article" date="2000" name="Genetics">
        <title>The Saccharomyces cerevisiae centromere protein Slk19p is required for two successive divisions during meiosis.</title>
        <authorList>
            <person name="Zeng X."/>
            <person name="Saunders W.S."/>
        </authorList>
    </citation>
    <scope>FUNCTION</scope>
</reference>
<reference key="6">
    <citation type="journal article" date="2001" name="Nat. Cell Biol.">
        <title>Orchestrating anaphase and mitotic exit: separase cleavage and localization of Slk19.</title>
        <authorList>
            <person name="Sullivan M."/>
            <person name="Lehane C."/>
            <person name="Uhlmann F."/>
        </authorList>
    </citation>
    <scope>FUNCTION</scope>
    <scope>CLEAVAGE BY ESP1</scope>
    <scope>SUBCELLULAR LOCATION</scope>
    <scope>PHOSPHORYLATION</scope>
    <scope>MUTAGENESIS OF ARG-77 AND SER-78</scope>
</reference>
<reference key="7">
    <citation type="journal article" date="2002" name="Cell">
        <title>Separase, polo kinase, the kinetochore protein Slk19, and Spo12 function in a network that controls Cdc14 localization during early anaphase.</title>
        <authorList>
            <person name="Stegmeier F."/>
            <person name="Visintin R."/>
            <person name="Amon A."/>
        </authorList>
    </citation>
    <scope>FUNCTION AS A COMPONENT OF THE FEAR NETWORK</scope>
</reference>
<reference key="8">
    <citation type="journal article" date="2002" name="Genes Cells">
        <title>The yeast kinetochore protein Slk19 is required to prevent aberrant chromosome segregation in meiosis and mitosis.</title>
        <authorList>
            <person name="Pfiz S."/>
            <person name="Zimmermann J."/>
            <person name="Hilt W."/>
        </authorList>
    </citation>
    <scope>FUNCTION</scope>
</reference>
<reference key="9">
    <citation type="journal article" date="2003" name="Dev. Cell">
        <title>Division of the nucleolus and its release of CDC14 during anaphase of meiosis I depends on separase, SPO12, and SLK19.</title>
        <authorList>
            <person name="Buonomo S.B."/>
            <person name="Rabitsch K.P."/>
            <person name="Fuchs J."/>
            <person name="Gruber S."/>
            <person name="Sullivan M."/>
            <person name="Uhlmann F."/>
            <person name="Petronczki M."/>
            <person name="Toth A."/>
            <person name="Nasmyth K."/>
        </authorList>
    </citation>
    <scope>FUNCTION AS A COMPONENT OF THE FEAR NETWORK</scope>
    <scope>CLEAVAGE BY ESP1</scope>
</reference>
<reference key="10">
    <citation type="journal article" date="2003" name="Nature">
        <title>Global analysis of protein localization in budding yeast.</title>
        <authorList>
            <person name="Huh W.-K."/>
            <person name="Falvo J.V."/>
            <person name="Gerke L.C."/>
            <person name="Carroll A.S."/>
            <person name="Howson R.W."/>
            <person name="Weissman J.S."/>
            <person name="O'Shea E.K."/>
        </authorList>
    </citation>
    <scope>SUBCELLULAR LOCATION [LARGE SCALE ANALYSIS]</scope>
</reference>
<reference key="11">
    <citation type="journal article" date="2003" name="Nature">
        <title>Global analysis of protein expression in yeast.</title>
        <authorList>
            <person name="Ghaemmaghami S."/>
            <person name="Huh W.-K."/>
            <person name="Bower K."/>
            <person name="Howson R.W."/>
            <person name="Belle A."/>
            <person name="Dephoure N."/>
            <person name="O'Shea E.K."/>
            <person name="Weissman J.S."/>
        </authorList>
    </citation>
    <scope>LEVEL OF PROTEIN EXPRESSION [LARGE SCALE ANALYSIS]</scope>
</reference>
<reference key="12">
    <citation type="journal article" date="2003" name="Nature">
        <title>Targets of the cyclin-dependent kinase Cdk1.</title>
        <authorList>
            <person name="Ubersax J.A."/>
            <person name="Woodbury E.L."/>
            <person name="Quang P.N."/>
            <person name="Paraz M."/>
            <person name="Blethrow J.D."/>
            <person name="Shah K."/>
            <person name="Shokat K.M."/>
            <person name="Morgan D.O."/>
        </authorList>
    </citation>
    <scope>PHOSPHORYLATION BY CDC28</scope>
</reference>
<reference key="13">
    <citation type="journal article" date="2004" name="Yeast">
        <title>Localization of proteins that are coordinately expressed with Cln2 during the cell cycle.</title>
        <authorList>
            <person name="Sundin B.A."/>
            <person name="Chiu C.-H."/>
            <person name="Riffle M."/>
            <person name="Davis T.N."/>
            <person name="Muller E.G.D."/>
        </authorList>
    </citation>
    <scope>SUBCELLULAR LOCATION</scope>
</reference>
<reference key="14">
    <citation type="journal article" date="2007" name="Proc. Natl. Acad. Sci. U.S.A.">
        <title>Analysis of phosphorylation sites on proteins from Saccharomyces cerevisiae by electron transfer dissociation (ETD) mass spectrometry.</title>
        <authorList>
            <person name="Chi A."/>
            <person name="Huttenhower C."/>
            <person name="Geer L.Y."/>
            <person name="Coon J.J."/>
            <person name="Syka J.E.P."/>
            <person name="Bai D.L."/>
            <person name="Shabanowitz J."/>
            <person name="Burke D.J."/>
            <person name="Troyanskaya O.G."/>
            <person name="Hunt D.F."/>
        </authorList>
    </citation>
    <scope>IDENTIFICATION BY MASS SPECTROMETRY [LARGE SCALE ANALYSIS]</scope>
</reference>
<reference key="15">
    <citation type="journal article" date="2008" name="Mol. Cell. Proteomics">
        <title>A multidimensional chromatography technology for in-depth phosphoproteome analysis.</title>
        <authorList>
            <person name="Albuquerque C.P."/>
            <person name="Smolka M.B."/>
            <person name="Payne S.H."/>
            <person name="Bafna V."/>
            <person name="Eng J."/>
            <person name="Zhou H."/>
        </authorList>
    </citation>
    <scope>PHOSPHORYLATION [LARGE SCALE ANALYSIS] AT SER-188; SER-189; SER-201; SER-216 AND THR-273</scope>
    <scope>IDENTIFICATION BY MASS SPECTROMETRY [LARGE SCALE ANALYSIS]</scope>
</reference>
<reference key="16">
    <citation type="journal article" date="2009" name="Science">
        <title>Global analysis of Cdk1 substrate phosphorylation sites provides insights into evolution.</title>
        <authorList>
            <person name="Holt L.J."/>
            <person name="Tuch B.B."/>
            <person name="Villen J."/>
            <person name="Johnson A.D."/>
            <person name="Gygi S.P."/>
            <person name="Morgan D.O."/>
        </authorList>
    </citation>
    <scope>PHOSPHORYLATION [LARGE SCALE ANALYSIS] AT SER-188; SER-189; SER-216 AND SER-283</scope>
    <scope>IDENTIFICATION BY MASS SPECTROMETRY [LARGE SCALE ANALYSIS]</scope>
</reference>
<reference key="17">
    <citation type="journal article" date="2012" name="Proc. Natl. Acad. Sci. U.S.A.">
        <title>N-terminal acetylome analyses and functional insights of the N-terminal acetyltransferase NatB.</title>
        <authorList>
            <person name="Van Damme P."/>
            <person name="Lasa M."/>
            <person name="Polevoda B."/>
            <person name="Gazquez C."/>
            <person name="Elosegui-Artola A."/>
            <person name="Kim D.S."/>
            <person name="De Juan-Pardo E."/>
            <person name="Demeyer K."/>
            <person name="Hole K."/>
            <person name="Larrea E."/>
            <person name="Timmerman E."/>
            <person name="Prieto J."/>
            <person name="Arnesen T."/>
            <person name="Sherman F."/>
            <person name="Gevaert K."/>
            <person name="Aldabe R."/>
        </authorList>
    </citation>
    <scope>IDENTIFICATION BY MASS SPECTROMETRY [LARGE SCALE ANALYSIS]</scope>
</reference>